<dbReference type="EC" id="3.6.4.-" evidence="1"/>
<dbReference type="EMBL" id="U60487">
    <property type="protein sequence ID" value="AAB40100.1"/>
    <property type="molecule type" value="Genomic_DNA"/>
</dbReference>
<dbReference type="SMR" id="P93586"/>
<dbReference type="STRING" id="4113.P93586"/>
<dbReference type="InParanoid" id="P93586"/>
<dbReference type="Proteomes" id="UP000011115">
    <property type="component" value="Unassembled WGS sequence"/>
</dbReference>
<dbReference type="ExpressionAtlas" id="P93586">
    <property type="expression patterns" value="baseline"/>
</dbReference>
<dbReference type="GO" id="GO:0015629">
    <property type="term" value="C:actin cytoskeleton"/>
    <property type="evidence" value="ECO:0000318"/>
    <property type="project" value="GO_Central"/>
</dbReference>
<dbReference type="GO" id="GO:0005829">
    <property type="term" value="C:cytosol"/>
    <property type="evidence" value="ECO:0000318"/>
    <property type="project" value="GO_Central"/>
</dbReference>
<dbReference type="GO" id="GO:0005524">
    <property type="term" value="F:ATP binding"/>
    <property type="evidence" value="ECO:0007669"/>
    <property type="project" value="UniProtKB-KW"/>
</dbReference>
<dbReference type="GO" id="GO:0016787">
    <property type="term" value="F:hydrolase activity"/>
    <property type="evidence" value="ECO:0007669"/>
    <property type="project" value="UniProtKB-KW"/>
</dbReference>
<dbReference type="GO" id="GO:0051301">
    <property type="term" value="P:cell division"/>
    <property type="evidence" value="ECO:0000318"/>
    <property type="project" value="GO_Central"/>
</dbReference>
<dbReference type="CDD" id="cd10224">
    <property type="entry name" value="ASKHA_NBD_actin"/>
    <property type="match status" value="1"/>
</dbReference>
<dbReference type="FunFam" id="3.30.420.40:FF:000291">
    <property type="entry name" value="Actin, alpha skeletal muscle"/>
    <property type="match status" value="1"/>
</dbReference>
<dbReference type="FunFam" id="3.90.640.10:FF:000001">
    <property type="entry name" value="Actin, muscle"/>
    <property type="match status" value="1"/>
</dbReference>
<dbReference type="FunFam" id="3.30.420.40:FF:000404">
    <property type="entry name" value="Major actin"/>
    <property type="match status" value="1"/>
</dbReference>
<dbReference type="Gene3D" id="3.30.420.40">
    <property type="match status" value="2"/>
</dbReference>
<dbReference type="Gene3D" id="3.90.640.10">
    <property type="entry name" value="Actin, Chain A, domain 4"/>
    <property type="match status" value="1"/>
</dbReference>
<dbReference type="InterPro" id="IPR004000">
    <property type="entry name" value="Actin"/>
</dbReference>
<dbReference type="InterPro" id="IPR020902">
    <property type="entry name" value="Actin/actin-like_CS"/>
</dbReference>
<dbReference type="InterPro" id="IPR004001">
    <property type="entry name" value="Actin_CS"/>
</dbReference>
<dbReference type="InterPro" id="IPR043129">
    <property type="entry name" value="ATPase_NBD"/>
</dbReference>
<dbReference type="PANTHER" id="PTHR11937">
    <property type="entry name" value="ACTIN"/>
    <property type="match status" value="1"/>
</dbReference>
<dbReference type="Pfam" id="PF00022">
    <property type="entry name" value="Actin"/>
    <property type="match status" value="1"/>
</dbReference>
<dbReference type="PRINTS" id="PR00190">
    <property type="entry name" value="ACTIN"/>
</dbReference>
<dbReference type="SMART" id="SM00268">
    <property type="entry name" value="ACTIN"/>
    <property type="match status" value="1"/>
</dbReference>
<dbReference type="SUPFAM" id="SSF53067">
    <property type="entry name" value="Actin-like ATPase domain"/>
    <property type="match status" value="2"/>
</dbReference>
<dbReference type="PROSITE" id="PS00406">
    <property type="entry name" value="ACTINS_1"/>
    <property type="match status" value="1"/>
</dbReference>
<dbReference type="PROSITE" id="PS01132">
    <property type="entry name" value="ACTINS_ACT_LIKE"/>
    <property type="match status" value="1"/>
</dbReference>
<organism>
    <name type="scientific">Solanum tuberosum</name>
    <name type="common">Potato</name>
    <dbReference type="NCBI Taxonomy" id="4113"/>
    <lineage>
        <taxon>Eukaryota</taxon>
        <taxon>Viridiplantae</taxon>
        <taxon>Streptophyta</taxon>
        <taxon>Embryophyta</taxon>
        <taxon>Tracheophyta</taxon>
        <taxon>Spermatophyta</taxon>
        <taxon>Magnoliopsida</taxon>
        <taxon>eudicotyledons</taxon>
        <taxon>Gunneridae</taxon>
        <taxon>Pentapetalae</taxon>
        <taxon>asterids</taxon>
        <taxon>lamiids</taxon>
        <taxon>Solanales</taxon>
        <taxon>Solanaceae</taxon>
        <taxon>Solanoideae</taxon>
        <taxon>Solaneae</taxon>
        <taxon>Solanum</taxon>
    </lineage>
</organism>
<evidence type="ECO:0000250" key="1">
    <source>
        <dbReference type="UniProtKB" id="P68137"/>
    </source>
</evidence>
<evidence type="ECO:0000305" key="2"/>
<accession>P93586</accession>
<sequence length="336" mass="37089">AGFAGDDAPRAVFPSIVGRPRHAGVMVGMGQKDAYVGDEAQSKRGILTLKYPIEHGIVNNWDDMEKIWHHTFYNELRVAPEERPVLLTEAPLNPKANREKMTQIMFETFNAPAMYVAIQAVLSLYASGRTTGIVLDSGDGVSHTVPIYEGYALPHAILRLDLAGADLTEYMVKILTERGYSFTTTAEKEIVRDMKEKLAYLALDFEQELETTTTGSAVEKNYELPDGQVITIGAERFRCPEVLYQPSLIGMEAAGIHETTYNSIMKCDVDIRKDLYGNIVLSGGSTMFPGIADRMSKEIQALAPSSMKIKVVAPPERKYSVWIGGSILASLSTFQQ</sequence>
<keyword id="KW-0067">ATP-binding</keyword>
<keyword id="KW-0963">Cytoplasm</keyword>
<keyword id="KW-0206">Cytoskeleton</keyword>
<keyword id="KW-0378">Hydrolase</keyword>
<keyword id="KW-0547">Nucleotide-binding</keyword>
<keyword id="KW-1185">Reference proteome</keyword>
<comment type="function">
    <text>Actins are highly conserved proteins that are involved in various types of cell motility and are ubiquitously expressed in all eukaryotic cells. Essential component of cell cytoskeleton; plays an important role in cytoplasmic streaming, cell shape determination, cell division, organelle movement and extension growth.</text>
</comment>
<comment type="catalytic activity">
    <reaction evidence="1">
        <text>ATP + H2O = ADP + phosphate + H(+)</text>
        <dbReference type="Rhea" id="RHEA:13065"/>
        <dbReference type="ChEBI" id="CHEBI:15377"/>
        <dbReference type="ChEBI" id="CHEBI:15378"/>
        <dbReference type="ChEBI" id="CHEBI:30616"/>
        <dbReference type="ChEBI" id="CHEBI:43474"/>
        <dbReference type="ChEBI" id="CHEBI:456216"/>
    </reaction>
</comment>
<comment type="subcellular location">
    <subcellularLocation>
        <location>Cytoplasm</location>
        <location>Cytoskeleton</location>
    </subcellularLocation>
</comment>
<comment type="miscellaneous">
    <text>There are at least 13 actin genes in potato.</text>
</comment>
<comment type="similarity">
    <text evidence="2">Belongs to the actin family.</text>
</comment>
<reference key="1">
    <citation type="journal article" date="1996" name="Mol. Biol. Evol.">
        <title>Phylogeny and substitution rates of angiosperm actin genes.</title>
        <authorList>
            <person name="Moniz de Sa M."/>
            <person name="Drouin G."/>
        </authorList>
    </citation>
    <scope>NUCLEOTIDE SEQUENCE [GENOMIC DNA]</scope>
</reference>
<protein>
    <recommendedName>
        <fullName>Actin-46</fullName>
        <ecNumber evidence="1">3.6.4.-</ecNumber>
    </recommendedName>
</protein>
<name>ACT2_SOLTU</name>
<proteinExistence type="inferred from homology"/>
<feature type="chain" id="PRO_0000089009" description="Actin-46">
    <location>
        <begin position="1" status="less than"/>
        <end position="336" status="greater than"/>
    </location>
</feature>
<feature type="non-terminal residue">
    <location>
        <position position="1"/>
    </location>
</feature>
<feature type="non-terminal residue">
    <location>
        <position position="336"/>
    </location>
</feature>